<dbReference type="EC" id="1.11.1.26" evidence="2"/>
<dbReference type="EMBL" id="AE005174">
    <property type="protein sequence ID" value="AAG54940.1"/>
    <property type="molecule type" value="Genomic_DNA"/>
</dbReference>
<dbReference type="EMBL" id="BA000007">
    <property type="protein sequence ID" value="BAB34067.1"/>
    <property type="molecule type" value="Genomic_DNA"/>
</dbReference>
<dbReference type="PIR" id="D90709">
    <property type="entry name" value="D90709"/>
</dbReference>
<dbReference type="PIR" id="H85559">
    <property type="entry name" value="H85559"/>
</dbReference>
<dbReference type="RefSeq" id="NP_308671.1">
    <property type="nucleotide sequence ID" value="NC_002695.1"/>
</dbReference>
<dbReference type="RefSeq" id="WP_000052796.1">
    <property type="nucleotide sequence ID" value="NZ_VOAI01000012.1"/>
</dbReference>
<dbReference type="SMR" id="P0AE10"/>
<dbReference type="STRING" id="155864.Z0749"/>
<dbReference type="GeneID" id="917003"/>
<dbReference type="GeneID" id="93776879"/>
<dbReference type="KEGG" id="ece:Z0749"/>
<dbReference type="KEGG" id="ecs:ECs_0644"/>
<dbReference type="PATRIC" id="fig|386585.9.peg.755"/>
<dbReference type="eggNOG" id="COG0450">
    <property type="taxonomic scope" value="Bacteria"/>
</dbReference>
<dbReference type="HOGENOM" id="CLU_042529_21_3_6"/>
<dbReference type="OMA" id="NNFGVMR"/>
<dbReference type="Proteomes" id="UP000000558">
    <property type="component" value="Chromosome"/>
</dbReference>
<dbReference type="Proteomes" id="UP000002519">
    <property type="component" value="Chromosome"/>
</dbReference>
<dbReference type="GO" id="GO:0005829">
    <property type="term" value="C:cytosol"/>
    <property type="evidence" value="ECO:0007669"/>
    <property type="project" value="TreeGrafter"/>
</dbReference>
<dbReference type="GO" id="GO:0102039">
    <property type="term" value="F:NADH-dependent peroxiredoxin activity"/>
    <property type="evidence" value="ECO:0007669"/>
    <property type="project" value="UniProtKB-EC"/>
</dbReference>
<dbReference type="GO" id="GO:0008379">
    <property type="term" value="F:thioredoxin peroxidase activity"/>
    <property type="evidence" value="ECO:0007669"/>
    <property type="project" value="TreeGrafter"/>
</dbReference>
<dbReference type="GO" id="GO:0045454">
    <property type="term" value="P:cell redox homeostasis"/>
    <property type="evidence" value="ECO:0007669"/>
    <property type="project" value="TreeGrafter"/>
</dbReference>
<dbReference type="GO" id="GO:0033554">
    <property type="term" value="P:cellular response to stress"/>
    <property type="evidence" value="ECO:0007669"/>
    <property type="project" value="TreeGrafter"/>
</dbReference>
<dbReference type="GO" id="GO:0042744">
    <property type="term" value="P:hydrogen peroxide catabolic process"/>
    <property type="evidence" value="ECO:0007669"/>
    <property type="project" value="TreeGrafter"/>
</dbReference>
<dbReference type="GO" id="GO:0006979">
    <property type="term" value="P:response to oxidative stress"/>
    <property type="evidence" value="ECO:0007669"/>
    <property type="project" value="InterPro"/>
</dbReference>
<dbReference type="CDD" id="cd03015">
    <property type="entry name" value="PRX_Typ2cys"/>
    <property type="match status" value="1"/>
</dbReference>
<dbReference type="FunFam" id="3.40.30.10:FF:000002">
    <property type="entry name" value="Alkyl hydroperoxide reductase C"/>
    <property type="match status" value="1"/>
</dbReference>
<dbReference type="Gene3D" id="3.40.30.10">
    <property type="entry name" value="Glutaredoxin"/>
    <property type="match status" value="1"/>
</dbReference>
<dbReference type="InterPro" id="IPR017559">
    <property type="entry name" value="AhpC"/>
</dbReference>
<dbReference type="InterPro" id="IPR000866">
    <property type="entry name" value="AhpC/TSA"/>
</dbReference>
<dbReference type="InterPro" id="IPR050217">
    <property type="entry name" value="Peroxiredoxin"/>
</dbReference>
<dbReference type="InterPro" id="IPR024706">
    <property type="entry name" value="Peroxiredoxin_AhpC-typ"/>
</dbReference>
<dbReference type="InterPro" id="IPR019479">
    <property type="entry name" value="Peroxiredoxin_C"/>
</dbReference>
<dbReference type="InterPro" id="IPR036249">
    <property type="entry name" value="Thioredoxin-like_sf"/>
</dbReference>
<dbReference type="InterPro" id="IPR013766">
    <property type="entry name" value="Thioredoxin_domain"/>
</dbReference>
<dbReference type="NCBIfam" id="TIGR03137">
    <property type="entry name" value="AhpC"/>
    <property type="match status" value="1"/>
</dbReference>
<dbReference type="PANTHER" id="PTHR10681:SF121">
    <property type="entry name" value="ALKYL HYDROPEROXIDE REDUCTASE C"/>
    <property type="match status" value="1"/>
</dbReference>
<dbReference type="PANTHER" id="PTHR10681">
    <property type="entry name" value="THIOREDOXIN PEROXIDASE"/>
    <property type="match status" value="1"/>
</dbReference>
<dbReference type="Pfam" id="PF10417">
    <property type="entry name" value="1-cysPrx_C"/>
    <property type="match status" value="1"/>
</dbReference>
<dbReference type="Pfam" id="PF00578">
    <property type="entry name" value="AhpC-TSA"/>
    <property type="match status" value="1"/>
</dbReference>
<dbReference type="PIRSF" id="PIRSF000239">
    <property type="entry name" value="AHPC"/>
    <property type="match status" value="1"/>
</dbReference>
<dbReference type="SUPFAM" id="SSF52833">
    <property type="entry name" value="Thioredoxin-like"/>
    <property type="match status" value="1"/>
</dbReference>
<dbReference type="PROSITE" id="PS51352">
    <property type="entry name" value="THIOREDOXIN_2"/>
    <property type="match status" value="1"/>
</dbReference>
<reference key="1">
    <citation type="journal article" date="2001" name="Nature">
        <title>Genome sequence of enterohaemorrhagic Escherichia coli O157:H7.</title>
        <authorList>
            <person name="Perna N.T."/>
            <person name="Plunkett G. III"/>
            <person name="Burland V."/>
            <person name="Mau B."/>
            <person name="Glasner J.D."/>
            <person name="Rose D.J."/>
            <person name="Mayhew G.F."/>
            <person name="Evans P.S."/>
            <person name="Gregor J."/>
            <person name="Kirkpatrick H.A."/>
            <person name="Posfai G."/>
            <person name="Hackett J."/>
            <person name="Klink S."/>
            <person name="Boutin A."/>
            <person name="Shao Y."/>
            <person name="Miller L."/>
            <person name="Grotbeck E.J."/>
            <person name="Davis N.W."/>
            <person name="Lim A."/>
            <person name="Dimalanta E.T."/>
            <person name="Potamousis K."/>
            <person name="Apodaca J."/>
            <person name="Anantharaman T.S."/>
            <person name="Lin J."/>
            <person name="Yen G."/>
            <person name="Schwartz D.C."/>
            <person name="Welch R.A."/>
            <person name="Blattner F.R."/>
        </authorList>
    </citation>
    <scope>NUCLEOTIDE SEQUENCE [LARGE SCALE GENOMIC DNA]</scope>
    <source>
        <strain>O157:H7 / EDL933 / ATCC 700927 / EHEC</strain>
    </source>
</reference>
<reference key="2">
    <citation type="journal article" date="2001" name="DNA Res.">
        <title>Complete genome sequence of enterohemorrhagic Escherichia coli O157:H7 and genomic comparison with a laboratory strain K-12.</title>
        <authorList>
            <person name="Hayashi T."/>
            <person name="Makino K."/>
            <person name="Ohnishi M."/>
            <person name="Kurokawa K."/>
            <person name="Ishii K."/>
            <person name="Yokoyama K."/>
            <person name="Han C.-G."/>
            <person name="Ohtsubo E."/>
            <person name="Nakayama K."/>
            <person name="Murata T."/>
            <person name="Tanaka M."/>
            <person name="Tobe T."/>
            <person name="Iida T."/>
            <person name="Takami H."/>
            <person name="Honda T."/>
            <person name="Sasakawa C."/>
            <person name="Ogasawara N."/>
            <person name="Yasunaga T."/>
            <person name="Kuhara S."/>
            <person name="Shiba T."/>
            <person name="Hattori M."/>
            <person name="Shinagawa H."/>
        </authorList>
    </citation>
    <scope>NUCLEOTIDE SEQUENCE [LARGE SCALE GENOMIC DNA]</scope>
    <source>
        <strain>O157:H7 / Sakai / RIMD 0509952 / EHEC</strain>
    </source>
</reference>
<evidence type="ECO:0000250" key="1"/>
<evidence type="ECO:0000250" key="2">
    <source>
        <dbReference type="UniProtKB" id="P0A251"/>
    </source>
</evidence>
<evidence type="ECO:0000250" key="3">
    <source>
        <dbReference type="UniProtKB" id="P0AE08"/>
    </source>
</evidence>
<evidence type="ECO:0000255" key="4">
    <source>
        <dbReference type="PROSITE-ProRule" id="PRU00691"/>
    </source>
</evidence>
<evidence type="ECO:0000305" key="5"/>
<gene>
    <name type="primary">ahpC</name>
    <name type="ordered locus">Z0749</name>
    <name type="ordered locus">ECs0644</name>
</gene>
<keyword id="KW-0007">Acetylation</keyword>
<keyword id="KW-0049">Antioxidant</keyword>
<keyword id="KW-0963">Cytoplasm</keyword>
<keyword id="KW-1015">Disulfide bond</keyword>
<keyword id="KW-0560">Oxidoreductase</keyword>
<keyword id="KW-0575">Peroxidase</keyword>
<keyword id="KW-0676">Redox-active center</keyword>
<keyword id="KW-1185">Reference proteome</keyword>
<accession>P0AE10</accession>
<accession>P26427</accession>
<name>AHPC_ECO57</name>
<feature type="initiator methionine" description="Removed" evidence="1">
    <location>
        <position position="1"/>
    </location>
</feature>
<feature type="chain" id="PRO_0000135116" description="Alkyl hydroperoxide reductase C">
    <location>
        <begin position="2"/>
        <end position="187"/>
    </location>
</feature>
<feature type="domain" description="Thioredoxin" evidence="4">
    <location>
        <begin position="2"/>
        <end position="157"/>
    </location>
</feature>
<feature type="active site" description="Cysteine sulfenic acid (-SOH) intermediate" evidence="2">
    <location>
        <position position="47"/>
    </location>
</feature>
<feature type="modified residue" description="N6-acetyllysine" evidence="1">
    <location>
        <position position="17"/>
    </location>
</feature>
<feature type="modified residue" description="N6-acetyllysine" evidence="1">
    <location>
        <position position="93"/>
    </location>
</feature>
<feature type="modified residue" description="N6-acetyllysine" evidence="1">
    <location>
        <position position="153"/>
    </location>
</feature>
<feature type="modified residue" description="N6-acetyllysine" evidence="1">
    <location>
        <position position="169"/>
    </location>
</feature>
<feature type="modified residue" description="N6-acetyllysine" evidence="1">
    <location>
        <position position="171"/>
    </location>
</feature>
<feature type="disulfide bond" description="Interchain (with C-166); in linked form" evidence="2">
    <location>
        <position position="47"/>
    </location>
</feature>
<feature type="disulfide bond" description="Interchain (with C-47); in linked form" evidence="2">
    <location>
        <position position="166"/>
    </location>
</feature>
<protein>
    <recommendedName>
        <fullName>Alkyl hydroperoxide reductase C</fullName>
        <ecNumber evidence="2">1.11.1.26</ecNumber>
    </recommendedName>
    <alternativeName>
        <fullName>Alkyl hydroperoxide reductase protein C22</fullName>
    </alternativeName>
    <alternativeName>
        <fullName>Peroxiredoxin</fullName>
    </alternativeName>
    <alternativeName>
        <fullName>SCRP-23</fullName>
    </alternativeName>
    <alternativeName>
        <fullName>Sulfate starvation-induced protein 8</fullName>
        <shortName>SSI8</shortName>
    </alternativeName>
    <alternativeName>
        <fullName>Thioredoxin peroxidase</fullName>
    </alternativeName>
</protein>
<sequence length="187" mass="20761">MSLINTKIKPFKNQAFKNGEFIEITEKDTEGRWSVFFFYPADFTFVCPTELGDVADHYEELQKLGVDVYAVSTDTHFTHKAWHSSSETIAKIKYAMIGDPTGALTRNFDNMREDEGLADRATFVVDPQGIIQAIEVTAEGIGRDASDLLRKIKAAQYVASHPGEVCPAKWKEGEATLAPSLDLVGKI</sequence>
<organism>
    <name type="scientific">Escherichia coli O157:H7</name>
    <dbReference type="NCBI Taxonomy" id="83334"/>
    <lineage>
        <taxon>Bacteria</taxon>
        <taxon>Pseudomonadati</taxon>
        <taxon>Pseudomonadota</taxon>
        <taxon>Gammaproteobacteria</taxon>
        <taxon>Enterobacterales</taxon>
        <taxon>Enterobacteriaceae</taxon>
        <taxon>Escherichia</taxon>
    </lineage>
</organism>
<comment type="function">
    <text evidence="2">Thiol-specific peroxidase that catalyzes the reduction of hydrogen peroxide and organic hydroperoxides to water and alcohols, respectively. Plays a role in cell protection against oxidative stress by detoxifying peroxides.</text>
</comment>
<comment type="catalytic activity">
    <reaction evidence="2">
        <text>a hydroperoxide + NADH + H(+) = an alcohol + NAD(+) + H2O</text>
        <dbReference type="Rhea" id="RHEA:62628"/>
        <dbReference type="ChEBI" id="CHEBI:15377"/>
        <dbReference type="ChEBI" id="CHEBI:15378"/>
        <dbReference type="ChEBI" id="CHEBI:30879"/>
        <dbReference type="ChEBI" id="CHEBI:35924"/>
        <dbReference type="ChEBI" id="CHEBI:57540"/>
        <dbReference type="ChEBI" id="CHEBI:57945"/>
        <dbReference type="EC" id="1.11.1.26"/>
    </reaction>
</comment>
<comment type="subunit">
    <text evidence="2">Homodimer; disulfide-linked, upon oxidation. 5 homodimers assemble to form a ring-like decamer.</text>
</comment>
<comment type="subcellular location">
    <subcellularLocation>
        <location evidence="3">Cytoplasm</location>
    </subcellularLocation>
</comment>
<comment type="miscellaneous">
    <text evidence="2">The active site is a conserved redox-active cysteine residue, the peroxidatic cysteine (C(P)), which makes the nucleophilic attack on the peroxide substrate. The peroxide oxidizes the C(P)-SH to cysteine sulfenic acid (C(P)-SOH), which then reacts with another cysteine residue, the resolving cysteine (C(R)), to form a disulfide bridge. The disulfide is subsequently reduced by an appropriate electron donor to complete the catalytic cycle. In this typical 2-Cys peroxiredoxin, C(R) is provided by the other dimeric subunit to form an intersubunit disulfide. The disulfide is subsequently reduced by AhpF.</text>
</comment>
<comment type="similarity">
    <text evidence="5">Belongs to the peroxiredoxin family. AhpC/Prx1 subfamily.</text>
</comment>
<proteinExistence type="inferred from homology"/>